<dbReference type="EC" id="3.1.1.17"/>
<dbReference type="EMBL" id="DQ972961">
    <property type="protein sequence ID" value="ABI96197.1"/>
    <property type="molecule type" value="mRNA"/>
</dbReference>
<dbReference type="RefSeq" id="NP_001070688.1">
    <property type="nucleotide sequence ID" value="NM_001077220.1"/>
</dbReference>
<dbReference type="SMR" id="Q06AA3"/>
<dbReference type="FunCoup" id="Q06AA3">
    <property type="interactions" value="246"/>
</dbReference>
<dbReference type="STRING" id="9823.ENSSSCP00000023581"/>
<dbReference type="PaxDb" id="9823-ENSSSCP00000013055"/>
<dbReference type="PeptideAtlas" id="Q06AA3"/>
<dbReference type="GeneID" id="768107"/>
<dbReference type="KEGG" id="ssc:768107"/>
<dbReference type="CTD" id="9104"/>
<dbReference type="eggNOG" id="KOG4499">
    <property type="taxonomic scope" value="Eukaryota"/>
</dbReference>
<dbReference type="InParanoid" id="Q06AA3"/>
<dbReference type="OrthoDB" id="423498at2759"/>
<dbReference type="UniPathway" id="UPA00991">
    <property type="reaction ID" value="UER00938"/>
</dbReference>
<dbReference type="Proteomes" id="UP000008227">
    <property type="component" value="Unplaced"/>
</dbReference>
<dbReference type="Proteomes" id="UP000314985">
    <property type="component" value="Unplaced"/>
</dbReference>
<dbReference type="Proteomes" id="UP000694570">
    <property type="component" value="Unplaced"/>
</dbReference>
<dbReference type="Proteomes" id="UP000694571">
    <property type="component" value="Unplaced"/>
</dbReference>
<dbReference type="Proteomes" id="UP000694720">
    <property type="component" value="Unplaced"/>
</dbReference>
<dbReference type="Proteomes" id="UP000694722">
    <property type="component" value="Unplaced"/>
</dbReference>
<dbReference type="Proteomes" id="UP000694723">
    <property type="component" value="Unplaced"/>
</dbReference>
<dbReference type="Proteomes" id="UP000694724">
    <property type="component" value="Unplaced"/>
</dbReference>
<dbReference type="Proteomes" id="UP000694725">
    <property type="component" value="Unplaced"/>
</dbReference>
<dbReference type="Proteomes" id="UP000694726">
    <property type="component" value="Unplaced"/>
</dbReference>
<dbReference type="Proteomes" id="UP000694727">
    <property type="component" value="Unplaced"/>
</dbReference>
<dbReference type="Proteomes" id="UP000694728">
    <property type="component" value="Unplaced"/>
</dbReference>
<dbReference type="GO" id="GO:0005737">
    <property type="term" value="C:cytoplasm"/>
    <property type="evidence" value="ECO:0007669"/>
    <property type="project" value="UniProtKB-SubCell"/>
</dbReference>
<dbReference type="GO" id="GO:0005509">
    <property type="term" value="F:calcium ion binding"/>
    <property type="evidence" value="ECO:0000250"/>
    <property type="project" value="UniProtKB"/>
</dbReference>
<dbReference type="GO" id="GO:0030234">
    <property type="term" value="F:enzyme regulator activity"/>
    <property type="evidence" value="ECO:0007669"/>
    <property type="project" value="InterPro"/>
</dbReference>
<dbReference type="GO" id="GO:0004341">
    <property type="term" value="F:gluconolactonase activity"/>
    <property type="evidence" value="ECO:0000250"/>
    <property type="project" value="UniProtKB"/>
</dbReference>
<dbReference type="GO" id="GO:0008270">
    <property type="term" value="F:zinc ion binding"/>
    <property type="evidence" value="ECO:0000250"/>
    <property type="project" value="UniProtKB"/>
</dbReference>
<dbReference type="GO" id="GO:0019853">
    <property type="term" value="P:L-ascorbic acid biosynthetic process"/>
    <property type="evidence" value="ECO:0000250"/>
    <property type="project" value="UniProtKB"/>
</dbReference>
<dbReference type="FunFam" id="2.120.10.30:FF:000027">
    <property type="entry name" value="Regucalcin homologue"/>
    <property type="match status" value="1"/>
</dbReference>
<dbReference type="Gene3D" id="2.120.10.30">
    <property type="entry name" value="TolB, C-terminal domain"/>
    <property type="match status" value="1"/>
</dbReference>
<dbReference type="InterPro" id="IPR011042">
    <property type="entry name" value="6-blade_b-propeller_TolB-like"/>
</dbReference>
<dbReference type="InterPro" id="IPR008367">
    <property type="entry name" value="Regucalcin"/>
</dbReference>
<dbReference type="InterPro" id="IPR013658">
    <property type="entry name" value="SGL"/>
</dbReference>
<dbReference type="InterPro" id="IPR005511">
    <property type="entry name" value="SMP-30"/>
</dbReference>
<dbReference type="PANTHER" id="PTHR10907">
    <property type="entry name" value="REGUCALCIN"/>
    <property type="match status" value="1"/>
</dbReference>
<dbReference type="PANTHER" id="PTHR10907:SF54">
    <property type="entry name" value="REGUCALCIN"/>
    <property type="match status" value="1"/>
</dbReference>
<dbReference type="Pfam" id="PF08450">
    <property type="entry name" value="SGL"/>
    <property type="match status" value="1"/>
</dbReference>
<dbReference type="PRINTS" id="PR01791">
    <property type="entry name" value="REGUCALCIN"/>
</dbReference>
<dbReference type="PRINTS" id="PR01790">
    <property type="entry name" value="SMP30FAMILY"/>
</dbReference>
<dbReference type="SUPFAM" id="SSF63829">
    <property type="entry name" value="Calcium-dependent phosphotriesterase"/>
    <property type="match status" value="1"/>
</dbReference>
<comment type="function">
    <text evidence="1">Gluconolactonase with low activity towards other sugar lactones, including gulonolactone and galactonolactone. Catalyzes a key step in ascorbic acid (vitamin C) biosynthesis. Can also hydrolyze diisopropyl phosphorofluoridate and phenylacetate (in vitro). Calcium-binding protein. Modulates Ca(2+) signaling, and Ca(2+)-dependent cellular processes and enzyme activities (By similarity).</text>
</comment>
<comment type="catalytic activity">
    <reaction>
        <text>D-glucono-1,5-lactone + H2O = D-gluconate + H(+)</text>
        <dbReference type="Rhea" id="RHEA:10440"/>
        <dbReference type="ChEBI" id="CHEBI:15377"/>
        <dbReference type="ChEBI" id="CHEBI:15378"/>
        <dbReference type="ChEBI" id="CHEBI:16217"/>
        <dbReference type="ChEBI" id="CHEBI:18391"/>
        <dbReference type="EC" id="3.1.1.17"/>
    </reaction>
</comment>
<comment type="cofactor">
    <cofactor evidence="1">
        <name>Zn(2+)</name>
        <dbReference type="ChEBI" id="CHEBI:29105"/>
    </cofactor>
    <cofactor evidence="1">
        <name>Mn(2+)</name>
        <dbReference type="ChEBI" id="CHEBI:29035"/>
    </cofactor>
    <cofactor evidence="1">
        <name>Ca(2+)</name>
        <dbReference type="ChEBI" id="CHEBI:29108"/>
    </cofactor>
    <cofactor evidence="1">
        <name>Mg(2+)</name>
        <dbReference type="ChEBI" id="CHEBI:18420"/>
    </cofactor>
    <text evidence="1">Binds 1 divalent metal cation per subunit. Most active with Zn(2+) and Mn(2+) ions. The physiological cofactor is most likely Ca(2+) or Mg(2+).</text>
</comment>
<comment type="pathway">
    <text>Cofactor biosynthesis; L-ascorbate biosynthesis via UDP-alpha-D-glucuronate pathway; L-ascorbate from UDP-alpha-D-glucuronate: step 3/4.</text>
</comment>
<comment type="subunit">
    <text evidence="1">Monomer.</text>
</comment>
<comment type="subcellular location">
    <subcellularLocation>
        <location evidence="1">Cytoplasm</location>
    </subcellularLocation>
</comment>
<comment type="similarity">
    <text evidence="3">Belongs to the SMP-30/CGR1 family.</text>
</comment>
<gene>
    <name type="primary">RGN</name>
    <name type="synonym">SMP30</name>
</gene>
<name>RGN_PIG</name>
<keyword id="KW-0060">Ascorbate biosynthesis</keyword>
<keyword id="KW-0106">Calcium</keyword>
<keyword id="KW-0963">Cytoplasm</keyword>
<keyword id="KW-0378">Hydrolase</keyword>
<keyword id="KW-0479">Metal-binding</keyword>
<keyword id="KW-1185">Reference proteome</keyword>
<evidence type="ECO:0000250" key="1"/>
<evidence type="ECO:0000250" key="2">
    <source>
        <dbReference type="UniProtKB" id="Q64374"/>
    </source>
</evidence>
<evidence type="ECO:0000305" key="3"/>
<accession>Q06AA3</accession>
<protein>
    <recommendedName>
        <fullName>Regucalcin</fullName>
        <shortName>RC</shortName>
    </recommendedName>
    <alternativeName>
        <fullName>Gluconolactonase</fullName>
        <shortName>GNL</shortName>
        <ecNumber>3.1.1.17</ecNumber>
    </alternativeName>
    <alternativeName>
        <fullName>Senescence marker protein 30</fullName>
        <shortName>SMP-30</shortName>
    </alternativeName>
</protein>
<reference key="1">
    <citation type="submission" date="2006-08" db="EMBL/GenBank/DDBJ databases">
        <authorList>
            <person name="Liu G.Y."/>
        </authorList>
    </citation>
    <scope>NUCLEOTIDE SEQUENCE [LARGE SCALE MRNA]</scope>
</reference>
<organism>
    <name type="scientific">Sus scrofa</name>
    <name type="common">Pig</name>
    <dbReference type="NCBI Taxonomy" id="9823"/>
    <lineage>
        <taxon>Eukaryota</taxon>
        <taxon>Metazoa</taxon>
        <taxon>Chordata</taxon>
        <taxon>Craniata</taxon>
        <taxon>Vertebrata</taxon>
        <taxon>Euteleostomi</taxon>
        <taxon>Mammalia</taxon>
        <taxon>Eutheria</taxon>
        <taxon>Laurasiatheria</taxon>
        <taxon>Artiodactyla</taxon>
        <taxon>Suina</taxon>
        <taxon>Suidae</taxon>
        <taxon>Sus</taxon>
    </lineage>
</organism>
<feature type="chain" id="PRO_0000289801" description="Regucalcin">
    <location>
        <begin position="1"/>
        <end position="299"/>
    </location>
</feature>
<feature type="active site" description="Proton donor/acceptor" evidence="1">
    <location>
        <position position="204"/>
    </location>
</feature>
<feature type="binding site" evidence="1">
    <location>
        <position position="18"/>
    </location>
    <ligand>
        <name>a divalent metal cation</name>
        <dbReference type="ChEBI" id="CHEBI:60240"/>
    </ligand>
</feature>
<feature type="binding site" evidence="1">
    <location>
        <position position="101"/>
    </location>
    <ligand>
        <name>substrate</name>
    </ligand>
</feature>
<feature type="binding site" evidence="1">
    <location>
        <position position="103"/>
    </location>
    <ligand>
        <name>substrate</name>
    </ligand>
</feature>
<feature type="binding site" evidence="1">
    <location>
        <position position="121"/>
    </location>
    <ligand>
        <name>substrate</name>
    </ligand>
</feature>
<feature type="binding site" evidence="1">
    <location>
        <position position="154"/>
    </location>
    <ligand>
        <name>a divalent metal cation</name>
        <dbReference type="ChEBI" id="CHEBI:60240"/>
    </ligand>
</feature>
<feature type="binding site" evidence="1">
    <location>
        <position position="204"/>
    </location>
    <ligand>
        <name>a divalent metal cation</name>
        <dbReference type="ChEBI" id="CHEBI:60240"/>
    </ligand>
</feature>
<feature type="modified residue" description="N6-succinyllysine" evidence="2">
    <location>
        <position position="244"/>
    </location>
</feature>
<feature type="modified residue" description="N6-succinyllysine" evidence="2">
    <location>
        <position position="253"/>
    </location>
</feature>
<sequence>MSSIKIECVLRENCHCGESPVWGEASNSLLFVDIPAKKVCRWNALSKQVQRVTLDAPVSSVALRQAGGYVATVGTKFCALNWEDESAVVLAAVDKDKKNNRFNDGKVDPAGRYFAGTMAEETAPAVLERHQGSLYALFADHHVEKYFDQVDISNGLDWSLDHKIFYYIDSLSYSVDAFDYDLQTGKISNRRSIYKMEKEEHIPDGMCIDTEGKLWVACYNGGRVIRLDPETGKRLQTVKLPVDKTTSCCFGGKDYSEMYVTCARDGLDPQGLLQQPEAGGIFKITGLGVKGLPPYPYAG</sequence>
<proteinExistence type="evidence at transcript level"/>